<organismHost>
    <name type="scientific">Mycobacterium</name>
    <dbReference type="NCBI Taxonomy" id="1763"/>
</organismHost>
<evidence type="ECO:0000256" key="1">
    <source>
        <dbReference type="SAM" id="MobiDB-lite"/>
    </source>
</evidence>
<keyword id="KW-1185">Reference proteome</keyword>
<reference key="1">
    <citation type="journal article" date="1993" name="Mol. Microbiol.">
        <title>DNA sequence, structure and gene expression of mycobacteriophage L5: a phage system for mycobacterial genetics.</title>
        <authorList>
            <person name="Hatfull G.F."/>
            <person name="Sarkis G.J."/>
        </authorList>
    </citation>
    <scope>NUCLEOTIDE SEQUENCE [LARGE SCALE GENOMIC DNA]</scope>
</reference>
<gene>
    <name type="primary">49</name>
</gene>
<organism>
    <name type="scientific">Mycobacterium phage L5</name>
    <name type="common">Mycobacteriophage L5</name>
    <dbReference type="NCBI Taxonomy" id="31757"/>
    <lineage>
        <taxon>Viruses</taxon>
        <taxon>Duplodnaviria</taxon>
        <taxon>Heunggongvirae</taxon>
        <taxon>Uroviricota</taxon>
        <taxon>Caudoviricetes</taxon>
        <taxon>Fromanvirus</taxon>
    </lineage>
</organism>
<name>VG49_BPML5</name>
<dbReference type="EMBL" id="Z18946">
    <property type="protein sequence ID" value="CAA79425.1"/>
    <property type="molecule type" value="Genomic_DNA"/>
</dbReference>
<dbReference type="PIR" id="S30994">
    <property type="entry name" value="S30994"/>
</dbReference>
<dbReference type="RefSeq" id="NP_039713.1">
    <property type="nucleotide sequence ID" value="NC_001335.1"/>
</dbReference>
<dbReference type="GeneID" id="2942947"/>
<dbReference type="KEGG" id="vg:2942947"/>
<dbReference type="OrthoDB" id="14029at10239"/>
<dbReference type="Proteomes" id="UP000002123">
    <property type="component" value="Genome"/>
</dbReference>
<sequence>MKGNQLSYDDPWSTAPAQPEPAPAPEPETAPSATVTTASAAVRDSMAVQHSTDGVSATFKFAGQYSDPWVVVKGADPADVLAKVNTAEFKALMDKVQQIAGHYAGSGGSAPANGGGGGQQQSRAPQAAQEAPGGEKRYCQHGEMVYKSGVSKKTGKPYALFSCTAPRDQQCDAQWPDKK</sequence>
<feature type="chain" id="PRO_0000164775" description="Gene 49 protein">
    <location>
        <begin position="1"/>
        <end position="179"/>
    </location>
</feature>
<feature type="region of interest" description="Disordered" evidence="1">
    <location>
        <begin position="1"/>
        <end position="38"/>
    </location>
</feature>
<feature type="region of interest" description="Disordered" evidence="1">
    <location>
        <begin position="102"/>
        <end position="137"/>
    </location>
</feature>
<feature type="compositionally biased region" description="Pro residues" evidence="1">
    <location>
        <begin position="18"/>
        <end position="28"/>
    </location>
</feature>
<feature type="compositionally biased region" description="Low complexity" evidence="1">
    <location>
        <begin position="29"/>
        <end position="38"/>
    </location>
</feature>
<feature type="compositionally biased region" description="Gly residues" evidence="1">
    <location>
        <begin position="104"/>
        <end position="119"/>
    </location>
</feature>
<feature type="compositionally biased region" description="Low complexity" evidence="1">
    <location>
        <begin position="120"/>
        <end position="132"/>
    </location>
</feature>
<accession>Q05261</accession>
<proteinExistence type="predicted"/>
<protein>
    <recommendedName>
        <fullName>Gene 49 protein</fullName>
    </recommendedName>
    <alternativeName>
        <fullName>Gp49</fullName>
    </alternativeName>
</protein>